<proteinExistence type="evidence at transcript level"/>
<protein>
    <recommendedName>
        <fullName>Teashirt homolog 1-A</fullName>
    </recommendedName>
    <alternativeName>
        <fullName>Teashirt 1A</fullName>
    </alternativeName>
</protein>
<comment type="function">
    <text evidence="4">Probable transcriptional regulator involved in developmental processes. May act as a transcriptional repressor (Potential). Involved in two major neuronal regionalization processes: primary anteroposterior (AP) axis patterning of the CNS and segmentation of the cranial neuronal crest (CNS) development.</text>
</comment>
<comment type="subcellular location">
    <subcellularLocation>
        <location evidence="3">Nucleus</location>
    </subcellularLocation>
</comment>
<comment type="developmental stage">
    <text>Expressed in early blastula stage embryos with a decrease during gastrulation. Expressed at early neurula stage in two broad wedge-shaped domains within the neuroectoderm flanking the midline. Throughout neurula stages, the anterior limit of its expression is maintained at a position posterior to hindbrain rhombomere 5. Confined to the trunk region of the prospective CNS. At stage 26, expressed in a gradient spanning the presumptive hindbrain/spinal cord boundary, the diencephalon, the pronephros and the presumptive olfactory placodes. From late neurula stage on, its expression becomes detectable in a distinct population of emigrating cranial neural crest (CNC) cells of the third branchial arch. At stage 26, expressed in the entire hyoid and branchial arch region and strongly reduced in this domain at tailbud stage.</text>
</comment>
<comment type="similarity">
    <text evidence="4">Belongs to the teashirt C2H2-type zinc-finger protein family.</text>
</comment>
<organism>
    <name type="scientific">Xenopus laevis</name>
    <name type="common">African clawed frog</name>
    <dbReference type="NCBI Taxonomy" id="8355"/>
    <lineage>
        <taxon>Eukaryota</taxon>
        <taxon>Metazoa</taxon>
        <taxon>Chordata</taxon>
        <taxon>Craniata</taxon>
        <taxon>Vertebrata</taxon>
        <taxon>Euteleostomi</taxon>
        <taxon>Amphibia</taxon>
        <taxon>Batrachia</taxon>
        <taxon>Anura</taxon>
        <taxon>Pipoidea</taxon>
        <taxon>Pipidae</taxon>
        <taxon>Xenopodinae</taxon>
        <taxon>Xenopus</taxon>
        <taxon>Xenopus</taxon>
    </lineage>
</organism>
<reference key="1">
    <citation type="journal article" date="2006" name="Dev. Biol.">
        <title>Xenopus Teashirt1 regulates posterior identity in brain and cranial neural crest.</title>
        <authorList>
            <person name="Koebernick K."/>
            <person name="Kashef J."/>
            <person name="Pieler T."/>
            <person name="Wedlich D."/>
        </authorList>
    </citation>
    <scope>NUCLEOTIDE SEQUENCE [MRNA]</scope>
    <scope>SUBCELLULAR LOCATION</scope>
</reference>
<name>TSH1A_XENLA</name>
<feature type="chain" id="PRO_0000399474" description="Teashirt homolog 1-A">
    <location>
        <begin position="1"/>
        <end position="1078"/>
    </location>
</feature>
<feature type="zinc finger region" description="C2H2-type 1" evidence="1">
    <location>
        <begin position="248"/>
        <end position="272"/>
    </location>
</feature>
<feature type="zinc finger region" description="C2H2-type 2" evidence="1">
    <location>
        <begin position="309"/>
        <end position="333"/>
    </location>
</feature>
<feature type="zinc finger region" description="C2H2-type 3" evidence="1">
    <location>
        <begin position="418"/>
        <end position="442"/>
    </location>
</feature>
<feature type="DNA-binding region" description="Homeobox">
    <location>
        <begin position="885"/>
        <end position="955"/>
    </location>
</feature>
<feature type="zinc finger region" description="C2H2-type 4" evidence="1">
    <location>
        <begin position="970"/>
        <end position="992"/>
    </location>
</feature>
<feature type="zinc finger region" description="C2H2-type 5" evidence="1">
    <location>
        <begin position="1038"/>
        <end position="1061"/>
    </location>
</feature>
<feature type="region of interest" description="Disordered" evidence="2">
    <location>
        <begin position="1"/>
        <end position="110"/>
    </location>
</feature>
<feature type="region of interest" description="Disordered" evidence="2">
    <location>
        <begin position="140"/>
        <end position="197"/>
    </location>
</feature>
<feature type="region of interest" description="Disordered" evidence="2">
    <location>
        <begin position="271"/>
        <end position="300"/>
    </location>
</feature>
<feature type="region of interest" description="Disordered" evidence="2">
    <location>
        <begin position="365"/>
        <end position="394"/>
    </location>
</feature>
<feature type="region of interest" description="Disordered" evidence="2">
    <location>
        <begin position="472"/>
        <end position="524"/>
    </location>
</feature>
<feature type="region of interest" description="Disordered" evidence="2">
    <location>
        <begin position="850"/>
        <end position="877"/>
    </location>
</feature>
<feature type="compositionally biased region" description="Acidic residues" evidence="2">
    <location>
        <begin position="26"/>
        <end position="36"/>
    </location>
</feature>
<feature type="compositionally biased region" description="Polar residues" evidence="2">
    <location>
        <begin position="57"/>
        <end position="71"/>
    </location>
</feature>
<feature type="compositionally biased region" description="Low complexity" evidence="2">
    <location>
        <begin position="143"/>
        <end position="197"/>
    </location>
</feature>
<feature type="compositionally biased region" description="Basic and acidic residues" evidence="2">
    <location>
        <begin position="271"/>
        <end position="286"/>
    </location>
</feature>
<feature type="compositionally biased region" description="Basic and acidic residues" evidence="2">
    <location>
        <begin position="497"/>
        <end position="524"/>
    </location>
</feature>
<feature type="compositionally biased region" description="Polar residues" evidence="2">
    <location>
        <begin position="853"/>
        <end position="862"/>
    </location>
</feature>
<sequence length="1078" mass="119161">MPRRKQQAPRRSAAYVPEEELKAADIEEDNLEDDGLSLDVQDSEYLYNDEHEIKETPSYQNSPISSATNQDAGYGSPFSETSDHLADFKSTSSKEGQDKEDGQNTENVSYPTDSLAQIKAVYTNLLSECCWSNLALDLKKSNENSSPTTNTNKSSMSEATGSTSDPDTPTTIPSSSCTNTSTSISVTTSNSTNSNSASGYDWHQAALAKTLQQTSYGLLPEPSLFSTVQLYRQSNKIYGSVFTGASRFKCKDCSAAYDTLVELTVHMNETGHYRDDNKDRDAERTKRWSKPRKRSLMEMEGKEDAQKVLKCMYCGHSFESLQDLSVHMIKTKHYQKVPLKEPVPAITKLIPSTKKRALQDIALPDSPEQAGISPGASVSESAKDPKAANPYVTPNNRYGYQNGASYTWQFEARKAQILKCMECGSSHDSLQQLTAHMMVTGHFLKVTNSASKKGKQLVMDAVIEEKIQSIPLPPTTHARLPGSYIKKQPDSPTGSTHSEEKKDPEKEKVNNCEVEKRIKEENEDPEKIEPATLYQYLREEDLDTSPKGGLDILKSLENTVSSAISKAQNGAPSWGGYPSIHAAYQLPGTVKALQPSVQSVQIQPSYAISVKTMTPDHNSLIHSPGSLTPPTHRSNVSAMEELVEKVTGKINIKKEEKVLEKEMVIPAKPPSPVAKENKEILKAEEANGKVLKKSNEADIQKPKKETPIEPHALNGTEPLKAKVTNGCSSLGIITDHSPEPSFINPLSALQSIMNTHLGKVSKPVSPSLDPLAMLYKISNSMLDKPIYPTTPVKQVESIERYYYEDSDQPIDLTKSKNKPFVTSITDHVSSPLRESALMDISDMVKNLTGRLTPKSSTPSTVSEKSDADGSSFEEAMDELSPVHKRKGRQSNWNPQHLLILQAQFASSLRETAEGKYIMSDLGPQERVNISKFTGLSMTTISHWLANVKYQLRRTGGTKFLKNLDTGHPVFFCNDCASQFRTASTYIGHLETHLGFSLKDLSKHSLNRIQEQQNVTKVITNKALSSVGGLIEEDSSSTFQCKLCNRTFASKHAVKLHLSKTHGKSPEDHVIYVTELRKQ</sequence>
<gene>
    <name type="primary">tshz1-a</name>
    <name type="synonym">tsh1</name>
    <name type="synonym">Xtsh1a</name>
</gene>
<accession>Q2HNT2</accession>
<keyword id="KW-0217">Developmental protein</keyword>
<keyword id="KW-0238">DNA-binding</keyword>
<keyword id="KW-0371">Homeobox</keyword>
<keyword id="KW-0479">Metal-binding</keyword>
<keyword id="KW-0539">Nucleus</keyword>
<keyword id="KW-1185">Reference proteome</keyword>
<keyword id="KW-0677">Repeat</keyword>
<keyword id="KW-0678">Repressor</keyword>
<keyword id="KW-0804">Transcription</keyword>
<keyword id="KW-0805">Transcription regulation</keyword>
<keyword id="KW-0862">Zinc</keyword>
<keyword id="KW-0863">Zinc-finger</keyword>
<evidence type="ECO:0000255" key="1">
    <source>
        <dbReference type="PROSITE-ProRule" id="PRU00042"/>
    </source>
</evidence>
<evidence type="ECO:0000256" key="2">
    <source>
        <dbReference type="SAM" id="MobiDB-lite"/>
    </source>
</evidence>
<evidence type="ECO:0000269" key="3">
    <source>
    </source>
</evidence>
<evidence type="ECO:0000305" key="4"/>
<dbReference type="EMBL" id="AY854806">
    <property type="protein sequence ID" value="AAX48758.1"/>
    <property type="molecule type" value="mRNA"/>
</dbReference>
<dbReference type="RefSeq" id="NP_001165936.1">
    <property type="nucleotide sequence ID" value="NM_001172465.1"/>
</dbReference>
<dbReference type="SMR" id="Q2HNT2"/>
<dbReference type="GeneID" id="100379090"/>
<dbReference type="KEGG" id="xla:100379090"/>
<dbReference type="AGR" id="Xenbase:XB-GENE-6465500"/>
<dbReference type="CTD" id="100379090"/>
<dbReference type="Xenbase" id="XB-GENE-6465500">
    <property type="gene designation" value="tshz1.S"/>
</dbReference>
<dbReference type="OrthoDB" id="5815793at2759"/>
<dbReference type="Proteomes" id="UP000186698">
    <property type="component" value="Chromosome 6S"/>
</dbReference>
<dbReference type="Bgee" id="100379090">
    <property type="expression patterns" value="Expressed in neurula embryo and 18 other cell types or tissues"/>
</dbReference>
<dbReference type="GO" id="GO:0005634">
    <property type="term" value="C:nucleus"/>
    <property type="evidence" value="ECO:0000318"/>
    <property type="project" value="GO_Central"/>
</dbReference>
<dbReference type="GO" id="GO:0003677">
    <property type="term" value="F:DNA binding"/>
    <property type="evidence" value="ECO:0000318"/>
    <property type="project" value="GO_Central"/>
</dbReference>
<dbReference type="GO" id="GO:0000981">
    <property type="term" value="F:DNA-binding transcription factor activity, RNA polymerase II-specific"/>
    <property type="evidence" value="ECO:0000318"/>
    <property type="project" value="GO_Central"/>
</dbReference>
<dbReference type="GO" id="GO:0008270">
    <property type="term" value="F:zinc ion binding"/>
    <property type="evidence" value="ECO:0007669"/>
    <property type="project" value="UniProtKB-KW"/>
</dbReference>
<dbReference type="GO" id="GO:0006357">
    <property type="term" value="P:regulation of transcription by RNA polymerase II"/>
    <property type="evidence" value="ECO:0000318"/>
    <property type="project" value="GO_Central"/>
</dbReference>
<dbReference type="CDD" id="cd00086">
    <property type="entry name" value="homeodomain"/>
    <property type="match status" value="1"/>
</dbReference>
<dbReference type="Gene3D" id="3.30.160.60">
    <property type="entry name" value="Classic Zinc Finger"/>
    <property type="match status" value="2"/>
</dbReference>
<dbReference type="InterPro" id="IPR001356">
    <property type="entry name" value="HD"/>
</dbReference>
<dbReference type="InterPro" id="IPR027008">
    <property type="entry name" value="Teashirt_fam"/>
</dbReference>
<dbReference type="InterPro" id="IPR013087">
    <property type="entry name" value="Znf_C2H2_type"/>
</dbReference>
<dbReference type="PANTHER" id="PTHR12487:SF6">
    <property type="entry name" value="TEASHIRT HOMOLOG 1"/>
    <property type="match status" value="1"/>
</dbReference>
<dbReference type="PANTHER" id="PTHR12487">
    <property type="entry name" value="TEASHIRT-RELATED"/>
    <property type="match status" value="1"/>
</dbReference>
<dbReference type="SMART" id="SM00389">
    <property type="entry name" value="HOX"/>
    <property type="match status" value="1"/>
</dbReference>
<dbReference type="SMART" id="SM00355">
    <property type="entry name" value="ZnF_C2H2"/>
    <property type="match status" value="5"/>
</dbReference>
<dbReference type="PROSITE" id="PS00028">
    <property type="entry name" value="ZINC_FINGER_C2H2_1"/>
    <property type="match status" value="4"/>
</dbReference>
<dbReference type="PROSITE" id="PS50157">
    <property type="entry name" value="ZINC_FINGER_C2H2_2"/>
    <property type="match status" value="3"/>
</dbReference>